<sequence length="369" mass="42805">MNDFTKNIAQALFNQDKINDLLRKELQQAVNDLLEAELTAFLGYNPYARDGWNTGNSRNGAYFRKVDTQFGKIEIQVPRDRNGLFHQHTLPDYKQHSDVLENMIIKLYSKGVTTREIADLIEKMYGSHYSPAQVSNISKQMIPKVEAYHKRKLSDKFFCVYLDATYVPLRRETFEREAVYIAIGIKPNGHKEVIDYCIAPNENIEVWTELLQSMKSRGLEQVELFLSDGVVGMKTALAKTYPQAHFQRCLVHVMRNICAKVRVEDREAIMNEFKQIHQQANKAAAVDVLHAFYAKWDKSYNHVIRNLKDIEPDLLVFYNYPKQIRASIYSTNMIESFNNVIKRKVKPKAEFPTEQSLDTFIGIQAMSYQ</sequence>
<dbReference type="EMBL" id="L26311">
    <property type="protein sequence ID" value="AAA25249.1"/>
    <property type="molecule type" value="Genomic_DNA"/>
</dbReference>
<dbReference type="SMR" id="P35880"/>
<dbReference type="GO" id="GO:0003677">
    <property type="term" value="F:DNA binding"/>
    <property type="evidence" value="ECO:0007669"/>
    <property type="project" value="UniProtKB-KW"/>
</dbReference>
<dbReference type="GO" id="GO:0004803">
    <property type="term" value="F:transposase activity"/>
    <property type="evidence" value="ECO:0007669"/>
    <property type="project" value="InterPro"/>
</dbReference>
<dbReference type="GO" id="GO:0006313">
    <property type="term" value="P:DNA transposition"/>
    <property type="evidence" value="ECO:0007669"/>
    <property type="project" value="InterPro"/>
</dbReference>
<dbReference type="InterPro" id="IPR001207">
    <property type="entry name" value="Transposase_mutator"/>
</dbReference>
<dbReference type="NCBIfam" id="NF033543">
    <property type="entry name" value="transpos_IS256"/>
    <property type="match status" value="1"/>
</dbReference>
<dbReference type="PANTHER" id="PTHR33217:SF8">
    <property type="entry name" value="MUTATOR FAMILY TRANSPOSASE"/>
    <property type="match status" value="1"/>
</dbReference>
<dbReference type="PANTHER" id="PTHR33217">
    <property type="entry name" value="TRANSPOSASE FOR INSERTION SEQUENCE ELEMENT IS1081"/>
    <property type="match status" value="1"/>
</dbReference>
<dbReference type="Pfam" id="PF00872">
    <property type="entry name" value="Transposase_mut"/>
    <property type="match status" value="1"/>
</dbReference>
<dbReference type="PROSITE" id="PS01007">
    <property type="entry name" value="TRANSPOSASE_MUTATOR"/>
    <property type="match status" value="1"/>
</dbReference>
<keyword id="KW-0233">DNA recombination</keyword>
<keyword id="KW-0238">DNA-binding</keyword>
<keyword id="KW-0814">Transposable element</keyword>
<keyword id="KW-0815">Transposition</keyword>
<evidence type="ECO:0000305" key="1"/>
<reference key="1">
    <citation type="journal article" date="1994" name="Gene">
        <title>Characterization of IS1201, an insertion sequence isolated from Lactobacillus helveticus.</title>
        <authorList>
            <person name="Tailliez P."/>
            <person name="Ehrlich S.D."/>
            <person name="Chopin M.-C."/>
        </authorList>
    </citation>
    <scope>NUCLEOTIDE SEQUENCE [GENOMIC DNA]</scope>
</reference>
<organism>
    <name type="scientific">Lactobacillus helveticus</name>
    <name type="common">Lactobacillus suntoryeus</name>
    <dbReference type="NCBI Taxonomy" id="1587"/>
    <lineage>
        <taxon>Bacteria</taxon>
        <taxon>Bacillati</taxon>
        <taxon>Bacillota</taxon>
        <taxon>Bacilli</taxon>
        <taxon>Lactobacillales</taxon>
        <taxon>Lactobacillaceae</taxon>
        <taxon>Lactobacillus</taxon>
    </lineage>
</organism>
<accession>P35880</accession>
<protein>
    <recommendedName>
        <fullName>Transposase for insertion sequence element IS1201</fullName>
    </recommendedName>
</protein>
<feature type="chain" id="PRO_0000211347" description="Transposase for insertion sequence element IS1201">
    <location>
        <begin position="1"/>
        <end position="369"/>
    </location>
</feature>
<comment type="function">
    <text>Required for the transposition of the insertion element.</text>
</comment>
<comment type="similarity">
    <text evidence="1">Belongs to the transposase mutator family.</text>
</comment>
<proteinExistence type="inferred from homology"/>
<name>TRA1_LACHE</name>